<organism>
    <name type="scientific">Paracidovorax citrulli (strain AAC00-1)</name>
    <name type="common">Acidovorax citrulli</name>
    <dbReference type="NCBI Taxonomy" id="397945"/>
    <lineage>
        <taxon>Bacteria</taxon>
        <taxon>Pseudomonadati</taxon>
        <taxon>Pseudomonadota</taxon>
        <taxon>Betaproteobacteria</taxon>
        <taxon>Burkholderiales</taxon>
        <taxon>Comamonadaceae</taxon>
        <taxon>Paracidovorax</taxon>
    </lineage>
</organism>
<proteinExistence type="inferred from homology"/>
<feature type="chain" id="PRO_1000026200" description="Nucleoside diphosphate kinase">
    <location>
        <begin position="1"/>
        <end position="141"/>
    </location>
</feature>
<feature type="active site" description="Pros-phosphohistidine intermediate" evidence="1">
    <location>
        <position position="117"/>
    </location>
</feature>
<feature type="binding site" evidence="1">
    <location>
        <position position="11"/>
    </location>
    <ligand>
        <name>ATP</name>
        <dbReference type="ChEBI" id="CHEBI:30616"/>
    </ligand>
</feature>
<feature type="binding site" evidence="1">
    <location>
        <position position="59"/>
    </location>
    <ligand>
        <name>ATP</name>
        <dbReference type="ChEBI" id="CHEBI:30616"/>
    </ligand>
</feature>
<feature type="binding site" evidence="1">
    <location>
        <position position="87"/>
    </location>
    <ligand>
        <name>ATP</name>
        <dbReference type="ChEBI" id="CHEBI:30616"/>
    </ligand>
</feature>
<feature type="binding site" evidence="1">
    <location>
        <position position="93"/>
    </location>
    <ligand>
        <name>ATP</name>
        <dbReference type="ChEBI" id="CHEBI:30616"/>
    </ligand>
</feature>
<feature type="binding site" evidence="1">
    <location>
        <position position="104"/>
    </location>
    <ligand>
        <name>ATP</name>
        <dbReference type="ChEBI" id="CHEBI:30616"/>
    </ligand>
</feature>
<feature type="binding site" evidence="1">
    <location>
        <position position="114"/>
    </location>
    <ligand>
        <name>ATP</name>
        <dbReference type="ChEBI" id="CHEBI:30616"/>
    </ligand>
</feature>
<accession>A1TM23</accession>
<dbReference type="EC" id="2.7.4.6" evidence="1"/>
<dbReference type="EMBL" id="CP000512">
    <property type="protein sequence ID" value="ABM32011.1"/>
    <property type="molecule type" value="Genomic_DNA"/>
</dbReference>
<dbReference type="RefSeq" id="WP_011794561.1">
    <property type="nucleotide sequence ID" value="NC_008752.1"/>
</dbReference>
<dbReference type="SMR" id="A1TM23"/>
<dbReference type="STRING" id="397945.Aave_1420"/>
<dbReference type="GeneID" id="79791084"/>
<dbReference type="KEGG" id="aav:Aave_1420"/>
<dbReference type="eggNOG" id="COG0105">
    <property type="taxonomic scope" value="Bacteria"/>
</dbReference>
<dbReference type="HOGENOM" id="CLU_060216_8_1_4"/>
<dbReference type="OrthoDB" id="9801161at2"/>
<dbReference type="Proteomes" id="UP000002596">
    <property type="component" value="Chromosome"/>
</dbReference>
<dbReference type="GO" id="GO:0005737">
    <property type="term" value="C:cytoplasm"/>
    <property type="evidence" value="ECO:0007669"/>
    <property type="project" value="UniProtKB-SubCell"/>
</dbReference>
<dbReference type="GO" id="GO:0005524">
    <property type="term" value="F:ATP binding"/>
    <property type="evidence" value="ECO:0007669"/>
    <property type="project" value="UniProtKB-UniRule"/>
</dbReference>
<dbReference type="GO" id="GO:0046872">
    <property type="term" value="F:metal ion binding"/>
    <property type="evidence" value="ECO:0007669"/>
    <property type="project" value="UniProtKB-KW"/>
</dbReference>
<dbReference type="GO" id="GO:0004550">
    <property type="term" value="F:nucleoside diphosphate kinase activity"/>
    <property type="evidence" value="ECO:0007669"/>
    <property type="project" value="UniProtKB-UniRule"/>
</dbReference>
<dbReference type="GO" id="GO:0006241">
    <property type="term" value="P:CTP biosynthetic process"/>
    <property type="evidence" value="ECO:0007669"/>
    <property type="project" value="UniProtKB-UniRule"/>
</dbReference>
<dbReference type="GO" id="GO:0006183">
    <property type="term" value="P:GTP biosynthetic process"/>
    <property type="evidence" value="ECO:0007669"/>
    <property type="project" value="UniProtKB-UniRule"/>
</dbReference>
<dbReference type="GO" id="GO:0006228">
    <property type="term" value="P:UTP biosynthetic process"/>
    <property type="evidence" value="ECO:0007669"/>
    <property type="project" value="UniProtKB-UniRule"/>
</dbReference>
<dbReference type="CDD" id="cd04413">
    <property type="entry name" value="NDPk_I"/>
    <property type="match status" value="1"/>
</dbReference>
<dbReference type="FunFam" id="3.30.70.141:FF:000001">
    <property type="entry name" value="Nucleoside diphosphate kinase"/>
    <property type="match status" value="1"/>
</dbReference>
<dbReference type="Gene3D" id="3.30.70.141">
    <property type="entry name" value="Nucleoside diphosphate kinase-like domain"/>
    <property type="match status" value="1"/>
</dbReference>
<dbReference type="HAMAP" id="MF_00451">
    <property type="entry name" value="NDP_kinase"/>
    <property type="match status" value="1"/>
</dbReference>
<dbReference type="InterPro" id="IPR034907">
    <property type="entry name" value="NDK-like_dom"/>
</dbReference>
<dbReference type="InterPro" id="IPR036850">
    <property type="entry name" value="NDK-like_dom_sf"/>
</dbReference>
<dbReference type="InterPro" id="IPR001564">
    <property type="entry name" value="Nucleoside_diP_kinase"/>
</dbReference>
<dbReference type="NCBIfam" id="NF001908">
    <property type="entry name" value="PRK00668.1"/>
    <property type="match status" value="1"/>
</dbReference>
<dbReference type="PANTHER" id="PTHR46161">
    <property type="entry name" value="NUCLEOSIDE DIPHOSPHATE KINASE"/>
    <property type="match status" value="1"/>
</dbReference>
<dbReference type="PANTHER" id="PTHR46161:SF3">
    <property type="entry name" value="NUCLEOSIDE DIPHOSPHATE KINASE DDB_G0292928-RELATED"/>
    <property type="match status" value="1"/>
</dbReference>
<dbReference type="Pfam" id="PF00334">
    <property type="entry name" value="NDK"/>
    <property type="match status" value="1"/>
</dbReference>
<dbReference type="PRINTS" id="PR01243">
    <property type="entry name" value="NUCDPKINASE"/>
</dbReference>
<dbReference type="SMART" id="SM00562">
    <property type="entry name" value="NDK"/>
    <property type="match status" value="1"/>
</dbReference>
<dbReference type="SUPFAM" id="SSF54919">
    <property type="entry name" value="Nucleoside diphosphate kinase, NDK"/>
    <property type="match status" value="1"/>
</dbReference>
<dbReference type="PROSITE" id="PS51374">
    <property type="entry name" value="NDPK_LIKE"/>
    <property type="match status" value="1"/>
</dbReference>
<comment type="function">
    <text evidence="1">Major role in the synthesis of nucleoside triphosphates other than ATP. The ATP gamma phosphate is transferred to the NDP beta phosphate via a ping-pong mechanism, using a phosphorylated active-site intermediate.</text>
</comment>
<comment type="catalytic activity">
    <reaction evidence="1">
        <text>a 2'-deoxyribonucleoside 5'-diphosphate + ATP = a 2'-deoxyribonucleoside 5'-triphosphate + ADP</text>
        <dbReference type="Rhea" id="RHEA:44640"/>
        <dbReference type="ChEBI" id="CHEBI:30616"/>
        <dbReference type="ChEBI" id="CHEBI:61560"/>
        <dbReference type="ChEBI" id="CHEBI:73316"/>
        <dbReference type="ChEBI" id="CHEBI:456216"/>
        <dbReference type="EC" id="2.7.4.6"/>
    </reaction>
</comment>
<comment type="catalytic activity">
    <reaction evidence="1">
        <text>a ribonucleoside 5'-diphosphate + ATP = a ribonucleoside 5'-triphosphate + ADP</text>
        <dbReference type="Rhea" id="RHEA:18113"/>
        <dbReference type="ChEBI" id="CHEBI:30616"/>
        <dbReference type="ChEBI" id="CHEBI:57930"/>
        <dbReference type="ChEBI" id="CHEBI:61557"/>
        <dbReference type="ChEBI" id="CHEBI:456216"/>
        <dbReference type="EC" id="2.7.4.6"/>
    </reaction>
</comment>
<comment type="cofactor">
    <cofactor evidence="1">
        <name>Mg(2+)</name>
        <dbReference type="ChEBI" id="CHEBI:18420"/>
    </cofactor>
</comment>
<comment type="subunit">
    <text evidence="1">Homotetramer.</text>
</comment>
<comment type="subcellular location">
    <subcellularLocation>
        <location evidence="1">Cytoplasm</location>
    </subcellularLocation>
</comment>
<comment type="similarity">
    <text evidence="1">Belongs to the NDK family.</text>
</comment>
<keyword id="KW-0067">ATP-binding</keyword>
<keyword id="KW-0963">Cytoplasm</keyword>
<keyword id="KW-0418">Kinase</keyword>
<keyword id="KW-0460">Magnesium</keyword>
<keyword id="KW-0479">Metal-binding</keyword>
<keyword id="KW-0546">Nucleotide metabolism</keyword>
<keyword id="KW-0547">Nucleotide-binding</keyword>
<keyword id="KW-0597">Phosphoprotein</keyword>
<keyword id="KW-0808">Transferase</keyword>
<sequence length="141" mass="15425">MAIERTLSIIKPDAVAKNVIGQIYARFEAAGLKIAAARMAHLSRQEAEQFYAVHKERPFFKDLVDFMISGPVMIQVLEGENAILKNRELMGATDPKKAAPGTIRADFADSIDANAVHGSDAAETAQVEVSFFFPGLNIYAR</sequence>
<gene>
    <name evidence="1" type="primary">ndk</name>
    <name type="ordered locus">Aave_1420</name>
</gene>
<protein>
    <recommendedName>
        <fullName evidence="1">Nucleoside diphosphate kinase</fullName>
        <shortName evidence="1">NDK</shortName>
        <shortName evidence="1">NDP kinase</shortName>
        <ecNumber evidence="1">2.7.4.6</ecNumber>
    </recommendedName>
    <alternativeName>
        <fullName evidence="1">Nucleoside-2-P kinase</fullName>
    </alternativeName>
</protein>
<name>NDK_PARC0</name>
<evidence type="ECO:0000255" key="1">
    <source>
        <dbReference type="HAMAP-Rule" id="MF_00451"/>
    </source>
</evidence>
<reference key="1">
    <citation type="submission" date="2006-12" db="EMBL/GenBank/DDBJ databases">
        <title>Complete sequence of Acidovorax avenae subsp. citrulli AAC00-1.</title>
        <authorList>
            <person name="Copeland A."/>
            <person name="Lucas S."/>
            <person name="Lapidus A."/>
            <person name="Barry K."/>
            <person name="Detter J.C."/>
            <person name="Glavina del Rio T."/>
            <person name="Dalin E."/>
            <person name="Tice H."/>
            <person name="Pitluck S."/>
            <person name="Kiss H."/>
            <person name="Brettin T."/>
            <person name="Bruce D."/>
            <person name="Han C."/>
            <person name="Tapia R."/>
            <person name="Gilna P."/>
            <person name="Schmutz J."/>
            <person name="Larimer F."/>
            <person name="Land M."/>
            <person name="Hauser L."/>
            <person name="Kyrpides N."/>
            <person name="Kim E."/>
            <person name="Stahl D."/>
            <person name="Richardson P."/>
        </authorList>
    </citation>
    <scope>NUCLEOTIDE SEQUENCE [LARGE SCALE GENOMIC DNA]</scope>
    <source>
        <strain>AAC00-1</strain>
    </source>
</reference>